<sequence length="458" mass="50880">MALWGGRFTQQADQQFKYFNDSLRFDYRLALQDIDGSIGWAKAIHSVGIINQAELVELIAALKQLRAEVAPNLAIVLQEDAEDIHSWVELQLIKKVGDLGKKLHTGRSRNDQVAVDMKLWCKAQVLSLQESIRALQEKLVETAEANQLSVMPGYTHLQRAQPITFAHWCMAYYEMLERDYSRLTDAYKRMNTCPLGSGALAGTAYAIDRDLLAQDLGFETATRNSLDSVSDRDHVLELLAAASISMMHLSRFAEDLIIFNSGESHFVELSDRVTSGSSLMPQKKNPDACELVRGKTGRVFGALSGLLATLKGLPLAYNKDMQEDKEGIFDAIETWQACVNISALVLEDIKVDTERTKEAAQQGYANATELADYLVAKGIPFREAHHIVGEAVVYAISQKKALEELNLDKFKQFHSVINDDVYPILSLDSCLTKRCAKGGVNLERVAEAIAAAKQNLNQ</sequence>
<gene>
    <name evidence="1" type="primary">argH</name>
    <name type="ordered locus">HAPS_0797</name>
</gene>
<proteinExistence type="inferred from homology"/>
<dbReference type="EC" id="4.3.2.1" evidence="1"/>
<dbReference type="EMBL" id="CP001321">
    <property type="protein sequence ID" value="ACL32433.1"/>
    <property type="molecule type" value="Genomic_DNA"/>
</dbReference>
<dbReference type="RefSeq" id="WP_012621918.1">
    <property type="nucleotide sequence ID" value="NC_011852.1"/>
</dbReference>
<dbReference type="SMR" id="B8F531"/>
<dbReference type="STRING" id="557723.HAPS_0797"/>
<dbReference type="KEGG" id="hap:HAPS_0797"/>
<dbReference type="HOGENOM" id="CLU_027272_2_3_6"/>
<dbReference type="UniPathway" id="UPA00068">
    <property type="reaction ID" value="UER00114"/>
</dbReference>
<dbReference type="Proteomes" id="UP000006743">
    <property type="component" value="Chromosome"/>
</dbReference>
<dbReference type="GO" id="GO:0005829">
    <property type="term" value="C:cytosol"/>
    <property type="evidence" value="ECO:0007669"/>
    <property type="project" value="TreeGrafter"/>
</dbReference>
<dbReference type="GO" id="GO:0004056">
    <property type="term" value="F:argininosuccinate lyase activity"/>
    <property type="evidence" value="ECO:0007669"/>
    <property type="project" value="UniProtKB-UniRule"/>
</dbReference>
<dbReference type="GO" id="GO:0042450">
    <property type="term" value="P:arginine biosynthetic process via ornithine"/>
    <property type="evidence" value="ECO:0007669"/>
    <property type="project" value="InterPro"/>
</dbReference>
<dbReference type="GO" id="GO:0006526">
    <property type="term" value="P:L-arginine biosynthetic process"/>
    <property type="evidence" value="ECO:0007669"/>
    <property type="project" value="UniProtKB-UniRule"/>
</dbReference>
<dbReference type="CDD" id="cd01359">
    <property type="entry name" value="Argininosuccinate_lyase"/>
    <property type="match status" value="1"/>
</dbReference>
<dbReference type="FunFam" id="1.10.40.30:FF:000001">
    <property type="entry name" value="Argininosuccinate lyase"/>
    <property type="match status" value="1"/>
</dbReference>
<dbReference type="FunFam" id="1.20.200.10:FF:000006">
    <property type="entry name" value="Argininosuccinate lyase"/>
    <property type="match status" value="1"/>
</dbReference>
<dbReference type="Gene3D" id="1.10.40.30">
    <property type="entry name" value="Fumarase/aspartase (C-terminal domain)"/>
    <property type="match status" value="1"/>
</dbReference>
<dbReference type="Gene3D" id="1.20.200.10">
    <property type="entry name" value="Fumarase/aspartase (Central domain)"/>
    <property type="match status" value="1"/>
</dbReference>
<dbReference type="Gene3D" id="1.10.275.10">
    <property type="entry name" value="Fumarase/aspartase (N-terminal domain)"/>
    <property type="match status" value="1"/>
</dbReference>
<dbReference type="HAMAP" id="MF_00006">
    <property type="entry name" value="Arg_succ_lyase"/>
    <property type="match status" value="1"/>
</dbReference>
<dbReference type="InterPro" id="IPR029419">
    <property type="entry name" value="Arg_succ_lyase_C"/>
</dbReference>
<dbReference type="InterPro" id="IPR009049">
    <property type="entry name" value="Argininosuccinate_lyase"/>
</dbReference>
<dbReference type="InterPro" id="IPR024083">
    <property type="entry name" value="Fumarase/histidase_N"/>
</dbReference>
<dbReference type="InterPro" id="IPR020557">
    <property type="entry name" value="Fumarate_lyase_CS"/>
</dbReference>
<dbReference type="InterPro" id="IPR000362">
    <property type="entry name" value="Fumarate_lyase_fam"/>
</dbReference>
<dbReference type="InterPro" id="IPR022761">
    <property type="entry name" value="Fumarate_lyase_N"/>
</dbReference>
<dbReference type="InterPro" id="IPR008948">
    <property type="entry name" value="L-Aspartase-like"/>
</dbReference>
<dbReference type="NCBIfam" id="TIGR00838">
    <property type="entry name" value="argH"/>
    <property type="match status" value="1"/>
</dbReference>
<dbReference type="NCBIfam" id="NF008964">
    <property type="entry name" value="PRK12308.1"/>
    <property type="match status" value="1"/>
</dbReference>
<dbReference type="PANTHER" id="PTHR43814">
    <property type="entry name" value="ARGININOSUCCINATE LYASE"/>
    <property type="match status" value="1"/>
</dbReference>
<dbReference type="PANTHER" id="PTHR43814:SF1">
    <property type="entry name" value="ARGININOSUCCINATE LYASE"/>
    <property type="match status" value="1"/>
</dbReference>
<dbReference type="Pfam" id="PF14698">
    <property type="entry name" value="ASL_C2"/>
    <property type="match status" value="1"/>
</dbReference>
<dbReference type="Pfam" id="PF00206">
    <property type="entry name" value="Lyase_1"/>
    <property type="match status" value="1"/>
</dbReference>
<dbReference type="PRINTS" id="PR00145">
    <property type="entry name" value="ARGSUCLYASE"/>
</dbReference>
<dbReference type="PRINTS" id="PR00149">
    <property type="entry name" value="FUMRATELYASE"/>
</dbReference>
<dbReference type="SUPFAM" id="SSF48557">
    <property type="entry name" value="L-aspartase-like"/>
    <property type="match status" value="1"/>
</dbReference>
<dbReference type="PROSITE" id="PS00163">
    <property type="entry name" value="FUMARATE_LYASES"/>
    <property type="match status" value="1"/>
</dbReference>
<reference key="1">
    <citation type="journal article" date="2009" name="J. Bacteriol.">
        <title>Complete genome sequence of Haemophilus parasuis SH0165.</title>
        <authorList>
            <person name="Yue M."/>
            <person name="Yang F."/>
            <person name="Yang J."/>
            <person name="Bei W."/>
            <person name="Cai X."/>
            <person name="Chen L."/>
            <person name="Dong J."/>
            <person name="Zhou R."/>
            <person name="Jin M."/>
            <person name="Jin Q."/>
            <person name="Chen H."/>
        </authorList>
    </citation>
    <scope>NUCLEOTIDE SEQUENCE [LARGE SCALE GENOMIC DNA]</scope>
    <source>
        <strain>SH0165</strain>
    </source>
</reference>
<name>ARLY_GLAP5</name>
<protein>
    <recommendedName>
        <fullName evidence="1">Argininosuccinate lyase</fullName>
        <shortName evidence="1">ASAL</shortName>
        <ecNumber evidence="1">4.3.2.1</ecNumber>
    </recommendedName>
    <alternativeName>
        <fullName evidence="1">Arginosuccinase</fullName>
    </alternativeName>
</protein>
<keyword id="KW-0028">Amino-acid biosynthesis</keyword>
<keyword id="KW-0055">Arginine biosynthesis</keyword>
<keyword id="KW-0963">Cytoplasm</keyword>
<keyword id="KW-0456">Lyase</keyword>
<keyword id="KW-1185">Reference proteome</keyword>
<evidence type="ECO:0000255" key="1">
    <source>
        <dbReference type="HAMAP-Rule" id="MF_00006"/>
    </source>
</evidence>
<feature type="chain" id="PRO_1000116326" description="Argininosuccinate lyase">
    <location>
        <begin position="1"/>
        <end position="458"/>
    </location>
</feature>
<organism>
    <name type="scientific">Glaesserella parasuis serovar 5 (strain SH0165)</name>
    <name type="common">Haemophilus parasuis</name>
    <dbReference type="NCBI Taxonomy" id="557723"/>
    <lineage>
        <taxon>Bacteria</taxon>
        <taxon>Pseudomonadati</taxon>
        <taxon>Pseudomonadota</taxon>
        <taxon>Gammaproteobacteria</taxon>
        <taxon>Pasteurellales</taxon>
        <taxon>Pasteurellaceae</taxon>
        <taxon>Glaesserella</taxon>
    </lineage>
</organism>
<accession>B8F531</accession>
<comment type="catalytic activity">
    <reaction evidence="1">
        <text>2-(N(omega)-L-arginino)succinate = fumarate + L-arginine</text>
        <dbReference type="Rhea" id="RHEA:24020"/>
        <dbReference type="ChEBI" id="CHEBI:29806"/>
        <dbReference type="ChEBI" id="CHEBI:32682"/>
        <dbReference type="ChEBI" id="CHEBI:57472"/>
        <dbReference type="EC" id="4.3.2.1"/>
    </reaction>
</comment>
<comment type="pathway">
    <text evidence="1">Amino-acid biosynthesis; L-arginine biosynthesis; L-arginine from L-ornithine and carbamoyl phosphate: step 3/3.</text>
</comment>
<comment type="subcellular location">
    <subcellularLocation>
        <location evidence="1">Cytoplasm</location>
    </subcellularLocation>
</comment>
<comment type="similarity">
    <text evidence="1">Belongs to the lyase 1 family. Argininosuccinate lyase subfamily.</text>
</comment>